<protein>
    <recommendedName>
        <fullName evidence="2">Probable translation initiation factor IF-2</fullName>
    </recommendedName>
</protein>
<organism>
    <name type="scientific">Methanocorpusculum labreanum (strain ATCC 43576 / DSM 4855 / Z)</name>
    <dbReference type="NCBI Taxonomy" id="410358"/>
    <lineage>
        <taxon>Archaea</taxon>
        <taxon>Methanobacteriati</taxon>
        <taxon>Methanobacteriota</taxon>
        <taxon>Stenosarchaea group</taxon>
        <taxon>Methanomicrobia</taxon>
        <taxon>Methanomicrobiales</taxon>
        <taxon>Methanocorpusculaceae</taxon>
        <taxon>Methanocorpusculum</taxon>
    </lineage>
</organism>
<name>IF2P_METLZ</name>
<proteinExistence type="inferred from homology"/>
<accession>A2STM8</accession>
<dbReference type="EMBL" id="CP000559">
    <property type="protein sequence ID" value="ABN07684.1"/>
    <property type="molecule type" value="Genomic_DNA"/>
</dbReference>
<dbReference type="RefSeq" id="WP_011833887.1">
    <property type="nucleotide sequence ID" value="NC_008942.1"/>
</dbReference>
<dbReference type="SMR" id="A2STM8"/>
<dbReference type="STRING" id="410358.Mlab_1520"/>
<dbReference type="GeneID" id="4794572"/>
<dbReference type="KEGG" id="mla:Mlab_1520"/>
<dbReference type="eggNOG" id="arCOG01560">
    <property type="taxonomic scope" value="Archaea"/>
</dbReference>
<dbReference type="HOGENOM" id="CLU_002656_3_3_2"/>
<dbReference type="OrthoDB" id="30957at2157"/>
<dbReference type="Proteomes" id="UP000000365">
    <property type="component" value="Chromosome"/>
</dbReference>
<dbReference type="GO" id="GO:0005737">
    <property type="term" value="C:cytoplasm"/>
    <property type="evidence" value="ECO:0007669"/>
    <property type="project" value="TreeGrafter"/>
</dbReference>
<dbReference type="GO" id="GO:0005525">
    <property type="term" value="F:GTP binding"/>
    <property type="evidence" value="ECO:0007669"/>
    <property type="project" value="UniProtKB-KW"/>
</dbReference>
<dbReference type="GO" id="GO:0003924">
    <property type="term" value="F:GTPase activity"/>
    <property type="evidence" value="ECO:0007669"/>
    <property type="project" value="UniProtKB-UniRule"/>
</dbReference>
<dbReference type="GO" id="GO:0003743">
    <property type="term" value="F:translation initiation factor activity"/>
    <property type="evidence" value="ECO:0007669"/>
    <property type="project" value="UniProtKB-UniRule"/>
</dbReference>
<dbReference type="CDD" id="cd03703">
    <property type="entry name" value="aeIF5B_II"/>
    <property type="match status" value="1"/>
</dbReference>
<dbReference type="CDD" id="cd16266">
    <property type="entry name" value="IF2_aeIF5B_IV"/>
    <property type="match status" value="1"/>
</dbReference>
<dbReference type="CDD" id="cd01887">
    <property type="entry name" value="IF2_eIF5B"/>
    <property type="match status" value="1"/>
</dbReference>
<dbReference type="FunFam" id="3.40.50.300:FF:000112">
    <property type="entry name" value="Eukaryotic translation initiation factor 5B"/>
    <property type="match status" value="1"/>
</dbReference>
<dbReference type="Gene3D" id="3.40.50.300">
    <property type="entry name" value="P-loop containing nucleotide triphosphate hydrolases"/>
    <property type="match status" value="1"/>
</dbReference>
<dbReference type="Gene3D" id="2.40.30.10">
    <property type="entry name" value="Translation factors"/>
    <property type="match status" value="2"/>
</dbReference>
<dbReference type="Gene3D" id="3.40.50.10050">
    <property type="entry name" value="Translation initiation factor IF- 2, domain 3"/>
    <property type="match status" value="1"/>
</dbReference>
<dbReference type="HAMAP" id="MF_00100_A">
    <property type="entry name" value="IF_2_A"/>
    <property type="match status" value="1"/>
</dbReference>
<dbReference type="InterPro" id="IPR029459">
    <property type="entry name" value="EFTU-type"/>
</dbReference>
<dbReference type="InterPro" id="IPR027417">
    <property type="entry name" value="P-loop_NTPase"/>
</dbReference>
<dbReference type="InterPro" id="IPR005225">
    <property type="entry name" value="Small_GTP-bd"/>
</dbReference>
<dbReference type="InterPro" id="IPR000795">
    <property type="entry name" value="T_Tr_GTP-bd_dom"/>
</dbReference>
<dbReference type="InterPro" id="IPR004544">
    <property type="entry name" value="TF_aIF-2_arc"/>
</dbReference>
<dbReference type="InterPro" id="IPR015760">
    <property type="entry name" value="TIF_IF2"/>
</dbReference>
<dbReference type="InterPro" id="IPR023115">
    <property type="entry name" value="TIF_IF2_dom3"/>
</dbReference>
<dbReference type="InterPro" id="IPR036925">
    <property type="entry name" value="TIF_IF2_dom3_sf"/>
</dbReference>
<dbReference type="InterPro" id="IPR009000">
    <property type="entry name" value="Transl_B-barrel_sf"/>
</dbReference>
<dbReference type="NCBIfam" id="TIGR00491">
    <property type="entry name" value="aIF-2"/>
    <property type="match status" value="1"/>
</dbReference>
<dbReference type="NCBIfam" id="NF003078">
    <property type="entry name" value="PRK04004.1"/>
    <property type="match status" value="1"/>
</dbReference>
<dbReference type="NCBIfam" id="TIGR00231">
    <property type="entry name" value="small_GTP"/>
    <property type="match status" value="1"/>
</dbReference>
<dbReference type="PANTHER" id="PTHR43381:SF4">
    <property type="entry name" value="EUKARYOTIC TRANSLATION INITIATION FACTOR 5B"/>
    <property type="match status" value="1"/>
</dbReference>
<dbReference type="PANTHER" id="PTHR43381">
    <property type="entry name" value="TRANSLATION INITIATION FACTOR IF-2-RELATED"/>
    <property type="match status" value="1"/>
</dbReference>
<dbReference type="Pfam" id="PF00009">
    <property type="entry name" value="GTP_EFTU"/>
    <property type="match status" value="1"/>
</dbReference>
<dbReference type="Pfam" id="PF14578">
    <property type="entry name" value="GTP_EFTU_D4"/>
    <property type="match status" value="1"/>
</dbReference>
<dbReference type="Pfam" id="PF11987">
    <property type="entry name" value="IF-2"/>
    <property type="match status" value="1"/>
</dbReference>
<dbReference type="PRINTS" id="PR00315">
    <property type="entry name" value="ELONGATNFCT"/>
</dbReference>
<dbReference type="SUPFAM" id="SSF52156">
    <property type="entry name" value="Initiation factor IF2/eIF5b, domain 3"/>
    <property type="match status" value="1"/>
</dbReference>
<dbReference type="SUPFAM" id="SSF52540">
    <property type="entry name" value="P-loop containing nucleoside triphosphate hydrolases"/>
    <property type="match status" value="1"/>
</dbReference>
<dbReference type="SUPFAM" id="SSF50447">
    <property type="entry name" value="Translation proteins"/>
    <property type="match status" value="1"/>
</dbReference>
<dbReference type="PROSITE" id="PS51722">
    <property type="entry name" value="G_TR_2"/>
    <property type="match status" value="1"/>
</dbReference>
<reference key="1">
    <citation type="journal article" date="2009" name="Stand. Genomic Sci.">
        <title>Complete genome sequence of Methanocorpusculum labreanum type strain Z.</title>
        <authorList>
            <person name="Anderson I.J."/>
            <person name="Sieprawska-Lupa M."/>
            <person name="Goltsman E."/>
            <person name="Lapidus A."/>
            <person name="Copeland A."/>
            <person name="Glavina Del Rio T."/>
            <person name="Tice H."/>
            <person name="Dalin E."/>
            <person name="Barry K."/>
            <person name="Pitluck S."/>
            <person name="Hauser L."/>
            <person name="Land M."/>
            <person name="Lucas S."/>
            <person name="Richardson P."/>
            <person name="Whitman W.B."/>
            <person name="Kyrpides N.C."/>
        </authorList>
    </citation>
    <scope>NUCLEOTIDE SEQUENCE [LARGE SCALE GENOMIC DNA]</scope>
    <source>
        <strain>ATCC 43576 / DSM 4855 / Z</strain>
    </source>
</reference>
<evidence type="ECO:0000250" key="1"/>
<evidence type="ECO:0000255" key="2">
    <source>
        <dbReference type="HAMAP-Rule" id="MF_00100"/>
    </source>
</evidence>
<sequence length="589" mass="64162">MEEHIRTPIVCVLGHVDHGKTSLLDRIRGSKVVAGEAGAITQHIGATLIPFDSIAKMSGDLGRLKTSVPGLLFIDTPGHHAFTTLRARGGALADIAILVVDVNEGFKQQTIEALQILRTCKTPFVIAATKLDKIPGWRPTPNASFQKAYKNQSERVQTECENRVYELVGKLSDMGFNSERFDRVSDFQRNLVIVPVSSMTGEGIGDLLMIMIGLAQRYLTEGLKTTTSGPGVGTVLEVKEEKGLGTTLDVILYDGIISVGDEIGIAGSDGALSTKVRALLQPRPMKEILIEDQFMRVKSVVAAAGVKISAPNLESIVAGSPIRVIRGDHDEVLAKINEEMQEINIKLSDVGVSVRADTIGALEALSNELDAKNIPIMRASVGPLSRRDLIDISVIKEDLFKVALCFNVPLLPDAEAMVRDEEVDVKIFSNRVIYKLLDDYLEWRDEMIRAKEAKQFETVVLPAKFSILPGCVFRMSGPAVVGVRVLGGTLRPKVSIATRDGKIVGEIKQIKLNKETIGEAKEGAEVAVSIDGVTIGRQIDVGETLYVAIPERHVKVLETEMLSHLNAGTVEALEEYTGIFRKTQPFWGK</sequence>
<comment type="function">
    <text evidence="2">Function in general translation initiation by promoting the binding of the formylmethionine-tRNA to ribosomes. Seems to function along with eIF-2.</text>
</comment>
<comment type="similarity">
    <text evidence="2">Belongs to the TRAFAC class translation factor GTPase superfamily. Classic translation factor GTPase family. IF-2 subfamily.</text>
</comment>
<feature type="chain" id="PRO_0000335527" description="Probable translation initiation factor IF-2">
    <location>
        <begin position="1"/>
        <end position="589"/>
    </location>
</feature>
<feature type="domain" description="tr-type G">
    <location>
        <begin position="5"/>
        <end position="219"/>
    </location>
</feature>
<feature type="region of interest" description="G1" evidence="1">
    <location>
        <begin position="14"/>
        <end position="21"/>
    </location>
</feature>
<feature type="region of interest" description="G2" evidence="1">
    <location>
        <begin position="39"/>
        <end position="43"/>
    </location>
</feature>
<feature type="region of interest" description="G3" evidence="1">
    <location>
        <begin position="75"/>
        <end position="78"/>
    </location>
</feature>
<feature type="region of interest" description="G4" evidence="1">
    <location>
        <begin position="129"/>
        <end position="132"/>
    </location>
</feature>
<feature type="region of interest" description="G5" evidence="1">
    <location>
        <begin position="197"/>
        <end position="199"/>
    </location>
</feature>
<feature type="binding site" evidence="2">
    <location>
        <begin position="14"/>
        <end position="21"/>
    </location>
    <ligand>
        <name>GTP</name>
        <dbReference type="ChEBI" id="CHEBI:37565"/>
    </ligand>
</feature>
<feature type="binding site" evidence="2">
    <location>
        <begin position="75"/>
        <end position="79"/>
    </location>
    <ligand>
        <name>GTP</name>
        <dbReference type="ChEBI" id="CHEBI:37565"/>
    </ligand>
</feature>
<feature type="binding site" evidence="2">
    <location>
        <begin position="129"/>
        <end position="132"/>
    </location>
    <ligand>
        <name>GTP</name>
        <dbReference type="ChEBI" id="CHEBI:37565"/>
    </ligand>
</feature>
<keyword id="KW-0342">GTP-binding</keyword>
<keyword id="KW-0396">Initiation factor</keyword>
<keyword id="KW-0547">Nucleotide-binding</keyword>
<keyword id="KW-0648">Protein biosynthesis</keyword>
<keyword id="KW-1185">Reference proteome</keyword>
<gene>
    <name evidence="2" type="primary">infB</name>
    <name type="ordered locus">Mlab_1520</name>
</gene>